<sequence length="201" mass="22990">MDSVRNFYDTIIKSSHPLVLSLHLAGKAIPVAFYLLGGWFVSYTSHFLIITILLLAVDFYLTKNISGRKLVHLRWWHNATGTNEDGSPFVFESYKQYPDYSGPAVNPIDSKLFWISTYAAPALWALFGVLCVLRLQFISLFLVLFAAGLTGYNAYGFRSCDRWEPNKKSSETSSIWPQMPTFTNVENIQRLFTFQTFFRNG</sequence>
<comment type="function">
    <text evidence="1">Golgi membrane protein involved in vesicular trafficking.</text>
</comment>
<comment type="subcellular location">
    <subcellularLocation>
        <location evidence="1">Golgi apparatus membrane</location>
        <topology evidence="1">Multi-pass membrane protein</topology>
    </subcellularLocation>
</comment>
<comment type="similarity">
    <text evidence="3">Belongs to the TVP23 family.</text>
</comment>
<keyword id="KW-0325">Glycoprotein</keyword>
<keyword id="KW-0333">Golgi apparatus</keyword>
<keyword id="KW-0472">Membrane</keyword>
<keyword id="KW-1185">Reference proteome</keyword>
<keyword id="KW-0812">Transmembrane</keyword>
<keyword id="KW-1133">Transmembrane helix</keyword>
<gene>
    <name type="primary">TVP23</name>
    <name type="ordered locus">AGR153C</name>
</gene>
<organism>
    <name type="scientific">Eremothecium gossypii (strain ATCC 10895 / CBS 109.51 / FGSC 9923 / NRRL Y-1056)</name>
    <name type="common">Yeast</name>
    <name type="synonym">Ashbya gossypii</name>
    <dbReference type="NCBI Taxonomy" id="284811"/>
    <lineage>
        <taxon>Eukaryota</taxon>
        <taxon>Fungi</taxon>
        <taxon>Dikarya</taxon>
        <taxon>Ascomycota</taxon>
        <taxon>Saccharomycotina</taxon>
        <taxon>Saccharomycetes</taxon>
        <taxon>Saccharomycetales</taxon>
        <taxon>Saccharomycetaceae</taxon>
        <taxon>Eremothecium</taxon>
    </lineage>
</organism>
<accession>Q74ZP5</accession>
<protein>
    <recommendedName>
        <fullName>Golgi apparatus membrane protein TVP23</fullName>
    </recommendedName>
</protein>
<name>TVP23_EREGS</name>
<reference key="1">
    <citation type="journal article" date="2004" name="Science">
        <title>The Ashbya gossypii genome as a tool for mapping the ancient Saccharomyces cerevisiae genome.</title>
        <authorList>
            <person name="Dietrich F.S."/>
            <person name="Voegeli S."/>
            <person name="Brachat S."/>
            <person name="Lerch A."/>
            <person name="Gates K."/>
            <person name="Steiner S."/>
            <person name="Mohr C."/>
            <person name="Poehlmann R."/>
            <person name="Luedi P."/>
            <person name="Choi S."/>
            <person name="Wing R.A."/>
            <person name="Flavier A."/>
            <person name="Gaffney T.D."/>
            <person name="Philippsen P."/>
        </authorList>
    </citation>
    <scope>NUCLEOTIDE SEQUENCE [LARGE SCALE GENOMIC DNA]</scope>
    <source>
        <strain>ATCC 10895 / CBS 109.51 / FGSC 9923 / NRRL Y-1056</strain>
    </source>
</reference>
<reference key="2">
    <citation type="journal article" date="2013" name="G3 (Bethesda)">
        <title>Genomes of Ashbya fungi isolated from insects reveal four mating-type loci, numerous translocations, lack of transposons, and distinct gene duplications.</title>
        <authorList>
            <person name="Dietrich F.S."/>
            <person name="Voegeli S."/>
            <person name="Kuo S."/>
            <person name="Philippsen P."/>
        </authorList>
    </citation>
    <scope>GENOME REANNOTATION</scope>
    <source>
        <strain>ATCC 10895 / CBS 109.51 / FGSC 9923 / NRRL Y-1056</strain>
    </source>
</reference>
<proteinExistence type="inferred from homology"/>
<dbReference type="EMBL" id="AE016820">
    <property type="protein sequence ID" value="AAS54643.1"/>
    <property type="molecule type" value="Genomic_DNA"/>
</dbReference>
<dbReference type="RefSeq" id="NP_986819.1">
    <property type="nucleotide sequence ID" value="NM_211881.1"/>
</dbReference>
<dbReference type="FunCoup" id="Q74ZP5">
    <property type="interactions" value="413"/>
</dbReference>
<dbReference type="STRING" id="284811.Q74ZP5"/>
<dbReference type="GlyCosmos" id="Q74ZP5">
    <property type="glycosylation" value="2 sites, No reported glycans"/>
</dbReference>
<dbReference type="EnsemblFungi" id="AAS54643">
    <property type="protein sequence ID" value="AAS54643"/>
    <property type="gene ID" value="AGOS_AGR153C"/>
</dbReference>
<dbReference type="GeneID" id="4623121"/>
<dbReference type="KEGG" id="ago:AGOS_AGR153C"/>
<dbReference type="eggNOG" id="KOG3195">
    <property type="taxonomic scope" value="Eukaryota"/>
</dbReference>
<dbReference type="HOGENOM" id="CLU_1190470_0_0_1"/>
<dbReference type="InParanoid" id="Q74ZP5"/>
<dbReference type="OMA" id="KMIWWID"/>
<dbReference type="OrthoDB" id="2151161at2759"/>
<dbReference type="Proteomes" id="UP000000591">
    <property type="component" value="Chromosome VII"/>
</dbReference>
<dbReference type="GO" id="GO:0000139">
    <property type="term" value="C:Golgi membrane"/>
    <property type="evidence" value="ECO:0000318"/>
    <property type="project" value="GO_Central"/>
</dbReference>
<dbReference type="GO" id="GO:0009306">
    <property type="term" value="P:protein secretion"/>
    <property type="evidence" value="ECO:0000318"/>
    <property type="project" value="GO_Central"/>
</dbReference>
<dbReference type="GO" id="GO:0016192">
    <property type="term" value="P:vesicle-mediated transport"/>
    <property type="evidence" value="ECO:0000318"/>
    <property type="project" value="GO_Central"/>
</dbReference>
<dbReference type="InterPro" id="IPR008564">
    <property type="entry name" value="TVP23-like"/>
</dbReference>
<dbReference type="PANTHER" id="PTHR13019">
    <property type="entry name" value="GOLGI APPARATUS MEMBRANE PROTEIN TVP23"/>
    <property type="match status" value="1"/>
</dbReference>
<dbReference type="PANTHER" id="PTHR13019:SF7">
    <property type="entry name" value="GOLGI APPARATUS MEMBRANE PROTEIN TVP23"/>
    <property type="match status" value="1"/>
</dbReference>
<dbReference type="Pfam" id="PF05832">
    <property type="entry name" value="DUF846"/>
    <property type="match status" value="1"/>
</dbReference>
<evidence type="ECO:0000250" key="1"/>
<evidence type="ECO:0000255" key="2"/>
<evidence type="ECO:0000305" key="3"/>
<feature type="chain" id="PRO_0000343034" description="Golgi apparatus membrane protein TVP23">
    <location>
        <begin position="1"/>
        <end position="201"/>
    </location>
</feature>
<feature type="transmembrane region" description="Helical" evidence="2">
    <location>
        <begin position="18"/>
        <end position="37"/>
    </location>
</feature>
<feature type="transmembrane region" description="Helical" evidence="2">
    <location>
        <begin position="43"/>
        <end position="61"/>
    </location>
</feature>
<feature type="transmembrane region" description="Helical" evidence="2">
    <location>
        <begin position="112"/>
        <end position="132"/>
    </location>
</feature>
<feature type="transmembrane region" description="Helical" evidence="2">
    <location>
        <begin position="137"/>
        <end position="157"/>
    </location>
</feature>
<feature type="glycosylation site" description="N-linked (GlcNAc...) asparagine" evidence="2">
    <location>
        <position position="64"/>
    </location>
</feature>
<feature type="glycosylation site" description="N-linked (GlcNAc...) asparagine" evidence="2">
    <location>
        <position position="78"/>
    </location>
</feature>